<protein>
    <recommendedName>
        <fullName evidence="1">A-type ATP synthase subunit D</fullName>
    </recommendedName>
</protein>
<feature type="chain" id="PRO_1000114481" description="A-type ATP synthase subunit D">
    <location>
        <begin position="1"/>
        <end position="224"/>
    </location>
</feature>
<feature type="region of interest" description="Disordered" evidence="2">
    <location>
        <begin position="200"/>
        <end position="224"/>
    </location>
</feature>
<feature type="compositionally biased region" description="Basic and acidic residues" evidence="2">
    <location>
        <begin position="200"/>
        <end position="209"/>
    </location>
</feature>
<feature type="compositionally biased region" description="Low complexity" evidence="2">
    <location>
        <begin position="215"/>
        <end position="224"/>
    </location>
</feature>
<reference key="1">
    <citation type="journal article" date="2008" name="Genomics">
        <title>Evolution in the laboratory: the genome of Halobacterium salinarum strain R1 compared to that of strain NRC-1.</title>
        <authorList>
            <person name="Pfeiffer F."/>
            <person name="Schuster S.C."/>
            <person name="Broicher A."/>
            <person name="Falb M."/>
            <person name="Palm P."/>
            <person name="Rodewald K."/>
            <person name="Ruepp A."/>
            <person name="Soppa J."/>
            <person name="Tittor J."/>
            <person name="Oesterhelt D."/>
        </authorList>
    </citation>
    <scope>NUCLEOTIDE SEQUENCE [LARGE SCALE GENOMIC DNA]</scope>
    <source>
        <strain>ATCC 29341 / DSM 671 / R1</strain>
    </source>
</reference>
<gene>
    <name evidence="1" type="primary">atpD</name>
    <name type="ordered locus">OE_3978R</name>
</gene>
<dbReference type="EMBL" id="AM774415">
    <property type="protein sequence ID" value="CAP14570.1"/>
    <property type="molecule type" value="Genomic_DNA"/>
</dbReference>
<dbReference type="RefSeq" id="WP_010903575.1">
    <property type="nucleotide sequence ID" value="NC_010364.1"/>
</dbReference>
<dbReference type="SMR" id="B0R751"/>
<dbReference type="EnsemblBacteria" id="CAP14570">
    <property type="protein sequence ID" value="CAP14570"/>
    <property type="gene ID" value="OE_3978R"/>
</dbReference>
<dbReference type="KEGG" id="hsl:OE_3978R"/>
<dbReference type="HOGENOM" id="CLU_069688_2_1_2"/>
<dbReference type="PhylomeDB" id="B0R751"/>
<dbReference type="Proteomes" id="UP000001321">
    <property type="component" value="Chromosome"/>
</dbReference>
<dbReference type="GO" id="GO:0005886">
    <property type="term" value="C:plasma membrane"/>
    <property type="evidence" value="ECO:0007669"/>
    <property type="project" value="UniProtKB-SubCell"/>
</dbReference>
<dbReference type="GO" id="GO:0005524">
    <property type="term" value="F:ATP binding"/>
    <property type="evidence" value="ECO:0007669"/>
    <property type="project" value="UniProtKB-UniRule"/>
</dbReference>
<dbReference type="GO" id="GO:0046933">
    <property type="term" value="F:proton-transporting ATP synthase activity, rotational mechanism"/>
    <property type="evidence" value="ECO:0007669"/>
    <property type="project" value="UniProtKB-UniRule"/>
</dbReference>
<dbReference type="GO" id="GO:0046961">
    <property type="term" value="F:proton-transporting ATPase activity, rotational mechanism"/>
    <property type="evidence" value="ECO:0007669"/>
    <property type="project" value="InterPro"/>
</dbReference>
<dbReference type="GO" id="GO:0042777">
    <property type="term" value="P:proton motive force-driven plasma membrane ATP synthesis"/>
    <property type="evidence" value="ECO:0007669"/>
    <property type="project" value="UniProtKB-UniRule"/>
</dbReference>
<dbReference type="FunFam" id="1.10.287.3240:FF:000007">
    <property type="entry name" value="V-type ATP synthase subunit D"/>
    <property type="match status" value="1"/>
</dbReference>
<dbReference type="Gene3D" id="1.10.287.3240">
    <property type="match status" value="1"/>
</dbReference>
<dbReference type="HAMAP" id="MF_00271">
    <property type="entry name" value="ATP_synth_D_arch"/>
    <property type="match status" value="1"/>
</dbReference>
<dbReference type="InterPro" id="IPR002699">
    <property type="entry name" value="V_ATPase_D"/>
</dbReference>
<dbReference type="NCBIfam" id="NF001542">
    <property type="entry name" value="PRK00373.1-1"/>
    <property type="match status" value="1"/>
</dbReference>
<dbReference type="NCBIfam" id="TIGR00309">
    <property type="entry name" value="V_ATPase_subD"/>
    <property type="match status" value="1"/>
</dbReference>
<dbReference type="PANTHER" id="PTHR11671">
    <property type="entry name" value="V-TYPE ATP SYNTHASE SUBUNIT D"/>
    <property type="match status" value="1"/>
</dbReference>
<dbReference type="Pfam" id="PF01813">
    <property type="entry name" value="ATP-synt_D"/>
    <property type="match status" value="1"/>
</dbReference>
<name>AATD_HALS3</name>
<proteinExistence type="inferred from homology"/>
<organism>
    <name type="scientific">Halobacterium salinarum (strain ATCC 29341 / DSM 671 / R1)</name>
    <dbReference type="NCBI Taxonomy" id="478009"/>
    <lineage>
        <taxon>Archaea</taxon>
        <taxon>Methanobacteriati</taxon>
        <taxon>Methanobacteriota</taxon>
        <taxon>Stenosarchaea group</taxon>
        <taxon>Halobacteria</taxon>
        <taxon>Halobacteriales</taxon>
        <taxon>Halobacteriaceae</taxon>
        <taxon>Halobacterium</taxon>
        <taxon>Halobacterium salinarum NRC-34001</taxon>
    </lineage>
</organism>
<keyword id="KW-0066">ATP synthesis</keyword>
<keyword id="KW-1003">Cell membrane</keyword>
<keyword id="KW-0375">Hydrogen ion transport</keyword>
<keyword id="KW-0406">Ion transport</keyword>
<keyword id="KW-0472">Membrane</keyword>
<keyword id="KW-0813">Transport</keyword>
<sequence>MAQDIKPTRKNLMEIEDRIDLSERGHDTLEQKRDGLIMEFMDILDQSQDVRSGLEGDYETAQQKINMARAMEGDVAVSGAAAALEEYPEITVESMNIMGVVVPQIESTKVKKSFDKRGYGILGTSARIDEAADAYEELLESIVLAAEVETAMKKMLTEIETTKRRVNALEFKLLPELHEGKEYIDQKLEEKEREEMFRMKKVKDKKEAQEEAADEAAAAESTGA</sequence>
<evidence type="ECO:0000255" key="1">
    <source>
        <dbReference type="HAMAP-Rule" id="MF_00271"/>
    </source>
</evidence>
<evidence type="ECO:0000256" key="2">
    <source>
        <dbReference type="SAM" id="MobiDB-lite"/>
    </source>
</evidence>
<accession>B0R751</accession>
<comment type="function">
    <text evidence="1">Component of the A-type ATP synthase that produces ATP from ADP in the presence of a proton gradient across the membrane.</text>
</comment>
<comment type="subunit">
    <text evidence="1">Has multiple subunits with at least A(3), B(3), C, D, E, F, H, I and proteolipid K(x).</text>
</comment>
<comment type="subcellular location">
    <subcellularLocation>
        <location evidence="1">Cell membrane</location>
        <topology evidence="1">Peripheral membrane protein</topology>
    </subcellularLocation>
</comment>
<comment type="similarity">
    <text evidence="1">Belongs to the V-ATPase D subunit family.</text>
</comment>